<organism>
    <name type="scientific">Streptococcus pneumoniae (strain CGSP14)</name>
    <dbReference type="NCBI Taxonomy" id="516950"/>
    <lineage>
        <taxon>Bacteria</taxon>
        <taxon>Bacillati</taxon>
        <taxon>Bacillota</taxon>
        <taxon>Bacilli</taxon>
        <taxon>Lactobacillales</taxon>
        <taxon>Streptococcaceae</taxon>
        <taxon>Streptococcus</taxon>
    </lineage>
</organism>
<evidence type="ECO:0000255" key="1">
    <source>
        <dbReference type="HAMAP-Rule" id="MF_00406"/>
    </source>
</evidence>
<proteinExistence type="inferred from homology"/>
<keyword id="KW-0963">Cytoplasm</keyword>
<keyword id="KW-0441">Lipid A biosynthesis</keyword>
<keyword id="KW-0444">Lipid biosynthesis</keyword>
<keyword id="KW-0443">Lipid metabolism</keyword>
<keyword id="KW-0456">Lyase</keyword>
<dbReference type="EC" id="4.2.1.59" evidence="1"/>
<dbReference type="EMBL" id="CP001033">
    <property type="protein sequence ID" value="ACB89674.1"/>
    <property type="molecule type" value="Genomic_DNA"/>
</dbReference>
<dbReference type="RefSeq" id="WP_000565504.1">
    <property type="nucleotide sequence ID" value="NC_010582.1"/>
</dbReference>
<dbReference type="SMR" id="B2ILW9"/>
<dbReference type="KEGG" id="spw:SPCG_0422"/>
<dbReference type="HOGENOM" id="CLU_078912_3_0_9"/>
<dbReference type="GO" id="GO:0005737">
    <property type="term" value="C:cytoplasm"/>
    <property type="evidence" value="ECO:0007669"/>
    <property type="project" value="UniProtKB-SubCell"/>
</dbReference>
<dbReference type="GO" id="GO:0016020">
    <property type="term" value="C:membrane"/>
    <property type="evidence" value="ECO:0007669"/>
    <property type="project" value="GOC"/>
</dbReference>
<dbReference type="GO" id="GO:0019171">
    <property type="term" value="F:(3R)-hydroxyacyl-[acyl-carrier-protein] dehydratase activity"/>
    <property type="evidence" value="ECO:0007669"/>
    <property type="project" value="UniProtKB-EC"/>
</dbReference>
<dbReference type="GO" id="GO:0006633">
    <property type="term" value="P:fatty acid biosynthetic process"/>
    <property type="evidence" value="ECO:0007669"/>
    <property type="project" value="UniProtKB-UniRule"/>
</dbReference>
<dbReference type="GO" id="GO:0009245">
    <property type="term" value="P:lipid A biosynthetic process"/>
    <property type="evidence" value="ECO:0007669"/>
    <property type="project" value="UniProtKB-UniRule"/>
</dbReference>
<dbReference type="CDD" id="cd01288">
    <property type="entry name" value="FabZ"/>
    <property type="match status" value="1"/>
</dbReference>
<dbReference type="FunFam" id="3.10.129.10:FF:000001">
    <property type="entry name" value="3-hydroxyacyl-[acyl-carrier-protein] dehydratase FabZ"/>
    <property type="match status" value="1"/>
</dbReference>
<dbReference type="Gene3D" id="3.10.129.10">
    <property type="entry name" value="Hotdog Thioesterase"/>
    <property type="match status" value="1"/>
</dbReference>
<dbReference type="HAMAP" id="MF_00406">
    <property type="entry name" value="FabZ"/>
    <property type="match status" value="1"/>
</dbReference>
<dbReference type="InterPro" id="IPR013114">
    <property type="entry name" value="FabA_FabZ"/>
</dbReference>
<dbReference type="InterPro" id="IPR010084">
    <property type="entry name" value="FabZ"/>
</dbReference>
<dbReference type="InterPro" id="IPR029069">
    <property type="entry name" value="HotDog_dom_sf"/>
</dbReference>
<dbReference type="NCBIfam" id="TIGR01750">
    <property type="entry name" value="fabZ"/>
    <property type="match status" value="1"/>
</dbReference>
<dbReference type="NCBIfam" id="NF000582">
    <property type="entry name" value="PRK00006.1"/>
    <property type="match status" value="1"/>
</dbReference>
<dbReference type="PANTHER" id="PTHR30272">
    <property type="entry name" value="3-HYDROXYACYL-[ACYL-CARRIER-PROTEIN] DEHYDRATASE"/>
    <property type="match status" value="1"/>
</dbReference>
<dbReference type="PANTHER" id="PTHR30272:SF1">
    <property type="entry name" value="3-HYDROXYACYL-[ACYL-CARRIER-PROTEIN] DEHYDRATASE"/>
    <property type="match status" value="1"/>
</dbReference>
<dbReference type="Pfam" id="PF07977">
    <property type="entry name" value="FabA"/>
    <property type="match status" value="1"/>
</dbReference>
<dbReference type="SUPFAM" id="SSF54637">
    <property type="entry name" value="Thioesterase/thiol ester dehydrase-isomerase"/>
    <property type="match status" value="1"/>
</dbReference>
<comment type="function">
    <text evidence="1">Involved in unsaturated fatty acids biosynthesis. Catalyzes the dehydration of short chain beta-hydroxyacyl-ACPs and long chain saturated and unsaturated beta-hydroxyacyl-ACPs.</text>
</comment>
<comment type="catalytic activity">
    <reaction evidence="1">
        <text>a (3R)-hydroxyacyl-[ACP] = a (2E)-enoyl-[ACP] + H2O</text>
        <dbReference type="Rhea" id="RHEA:13097"/>
        <dbReference type="Rhea" id="RHEA-COMP:9925"/>
        <dbReference type="Rhea" id="RHEA-COMP:9945"/>
        <dbReference type="ChEBI" id="CHEBI:15377"/>
        <dbReference type="ChEBI" id="CHEBI:78784"/>
        <dbReference type="ChEBI" id="CHEBI:78827"/>
        <dbReference type="EC" id="4.2.1.59"/>
    </reaction>
</comment>
<comment type="subcellular location">
    <subcellularLocation>
        <location evidence="1">Cytoplasm</location>
    </subcellularLocation>
</comment>
<comment type="similarity">
    <text evidence="1">Belongs to the thioester dehydratase family. FabZ subfamily.</text>
</comment>
<gene>
    <name evidence="1" type="primary">fabZ</name>
    <name type="ordered locus">SPCG_0422</name>
</gene>
<feature type="chain" id="PRO_1000123671" description="3-hydroxyacyl-[acyl-carrier-protein] dehydratase FabZ">
    <location>
        <begin position="1"/>
        <end position="140"/>
    </location>
</feature>
<feature type="active site" evidence="1">
    <location>
        <position position="47"/>
    </location>
</feature>
<sequence>MIDIQEIKEALPHRYPMLLVDRVLEVSEDTIVAIKNVTINEPFFNGHFPQYPVMPGVLIMEALAQTAGVLELSKPENKGKLVFYAGMDKVKFKKQVVPGDQLVMTATFVKRRGTIAVVEAKAEVDGKLAASGILTFAIGN</sequence>
<name>FABZ_STRPS</name>
<accession>B2ILW9</accession>
<reference key="1">
    <citation type="journal article" date="2009" name="BMC Genomics">
        <title>Genome evolution driven by host adaptations results in a more virulent and antimicrobial-resistant Streptococcus pneumoniae serotype 14.</title>
        <authorList>
            <person name="Ding F."/>
            <person name="Tang P."/>
            <person name="Hsu M.-H."/>
            <person name="Cui P."/>
            <person name="Hu S."/>
            <person name="Yu J."/>
            <person name="Chiu C.-H."/>
        </authorList>
    </citation>
    <scope>NUCLEOTIDE SEQUENCE [LARGE SCALE GENOMIC DNA]</scope>
    <source>
        <strain>CGSP14</strain>
    </source>
</reference>
<protein>
    <recommendedName>
        <fullName evidence="1">3-hydroxyacyl-[acyl-carrier-protein] dehydratase FabZ</fullName>
        <ecNumber evidence="1">4.2.1.59</ecNumber>
    </recommendedName>
    <alternativeName>
        <fullName evidence="1">(3R)-hydroxymyristoyl-[acyl-carrier-protein] dehydratase</fullName>
        <shortName evidence="1">(3R)-hydroxymyristoyl-ACP dehydrase</shortName>
    </alternativeName>
    <alternativeName>
        <fullName evidence="1">Beta-hydroxyacyl-ACP dehydratase</fullName>
    </alternativeName>
</protein>